<sequence length="178" mass="19694">MDKKSNQVERPVVFFDISIGDVPVGRMKMELFSDIVPRTAENFRQLCTGEYKRNGVPQGYKNCLFHRVIKDFMVQGGDFIKGDGTGAMCIYGGDRFADENFIEKHTGAGLLSMANSGPNSNGCQFFITCDACDFLDGKHVVFGRLVDGLLTLRKIENVATGPNNRPKLPVKITECGQM</sequence>
<evidence type="ECO:0000250" key="1"/>
<evidence type="ECO:0000255" key="2">
    <source>
        <dbReference type="PROSITE-ProRule" id="PRU00156"/>
    </source>
</evidence>
<evidence type="ECO:0000305" key="3"/>
<dbReference type="EC" id="5.2.1.8"/>
<dbReference type="EMBL" id="CH476745">
    <property type="protein sequence ID" value="EIE89933.1"/>
    <property type="status" value="ALT_SEQ"/>
    <property type="molecule type" value="Genomic_DNA"/>
</dbReference>
<dbReference type="SMR" id="P0C1I3"/>
<dbReference type="FunCoup" id="P0C1I3">
    <property type="interactions" value="1036"/>
</dbReference>
<dbReference type="STRING" id="246409.P0C1I3"/>
<dbReference type="eggNOG" id="KOG0879">
    <property type="taxonomic scope" value="Eukaryota"/>
</dbReference>
<dbReference type="InParanoid" id="P0C1I3"/>
<dbReference type="OrthoDB" id="493at4827"/>
<dbReference type="Proteomes" id="UP000009138">
    <property type="component" value="Unassembled WGS sequence"/>
</dbReference>
<dbReference type="GO" id="GO:0005737">
    <property type="term" value="C:cytoplasm"/>
    <property type="evidence" value="ECO:0007669"/>
    <property type="project" value="TreeGrafter"/>
</dbReference>
<dbReference type="GO" id="GO:0005634">
    <property type="term" value="C:nucleus"/>
    <property type="evidence" value="ECO:0007669"/>
    <property type="project" value="UniProtKB-SubCell"/>
</dbReference>
<dbReference type="GO" id="GO:0016018">
    <property type="term" value="F:cyclosporin A binding"/>
    <property type="evidence" value="ECO:0007669"/>
    <property type="project" value="TreeGrafter"/>
</dbReference>
<dbReference type="GO" id="GO:0003755">
    <property type="term" value="F:peptidyl-prolyl cis-trans isomerase activity"/>
    <property type="evidence" value="ECO:0007669"/>
    <property type="project" value="UniProtKB-KW"/>
</dbReference>
<dbReference type="GO" id="GO:0006457">
    <property type="term" value="P:protein folding"/>
    <property type="evidence" value="ECO:0007669"/>
    <property type="project" value="InterPro"/>
</dbReference>
<dbReference type="CDD" id="cd01926">
    <property type="entry name" value="cyclophilin_ABH_like"/>
    <property type="match status" value="1"/>
</dbReference>
<dbReference type="FunFam" id="2.40.100.10:FF:000039">
    <property type="entry name" value="Peptidyl-prolyl cis-trans isomerase"/>
    <property type="match status" value="1"/>
</dbReference>
<dbReference type="Gene3D" id="2.40.100.10">
    <property type="entry name" value="Cyclophilin-like"/>
    <property type="match status" value="1"/>
</dbReference>
<dbReference type="InterPro" id="IPR029000">
    <property type="entry name" value="Cyclophilin-like_dom_sf"/>
</dbReference>
<dbReference type="InterPro" id="IPR024936">
    <property type="entry name" value="Cyclophilin-type_PPIase"/>
</dbReference>
<dbReference type="InterPro" id="IPR020892">
    <property type="entry name" value="Cyclophilin-type_PPIase_CS"/>
</dbReference>
<dbReference type="InterPro" id="IPR002130">
    <property type="entry name" value="Cyclophilin-type_PPIase_dom"/>
</dbReference>
<dbReference type="PANTHER" id="PTHR11071">
    <property type="entry name" value="PEPTIDYL-PROLYL CIS-TRANS ISOMERASE"/>
    <property type="match status" value="1"/>
</dbReference>
<dbReference type="PANTHER" id="PTHR11071:SF561">
    <property type="entry name" value="PEPTIDYL-PROLYL CIS-TRANS ISOMERASE D-RELATED"/>
    <property type="match status" value="1"/>
</dbReference>
<dbReference type="Pfam" id="PF00160">
    <property type="entry name" value="Pro_isomerase"/>
    <property type="match status" value="1"/>
</dbReference>
<dbReference type="PIRSF" id="PIRSF001467">
    <property type="entry name" value="Peptidylpro_ismrse"/>
    <property type="match status" value="1"/>
</dbReference>
<dbReference type="PRINTS" id="PR00153">
    <property type="entry name" value="CSAPPISMRASE"/>
</dbReference>
<dbReference type="SUPFAM" id="SSF50891">
    <property type="entry name" value="Cyclophilin-like"/>
    <property type="match status" value="1"/>
</dbReference>
<dbReference type="PROSITE" id="PS00170">
    <property type="entry name" value="CSA_PPIASE_1"/>
    <property type="match status" value="1"/>
</dbReference>
<dbReference type="PROSITE" id="PS50072">
    <property type="entry name" value="CSA_PPIASE_2"/>
    <property type="match status" value="1"/>
</dbReference>
<comment type="function">
    <text evidence="1">PPIases accelerate the folding of proteins. It catalyzes the cis-trans isomerization of proline imidic peptide bonds in oligopeptides (By similarity).</text>
</comment>
<comment type="catalytic activity">
    <reaction>
        <text>[protein]-peptidylproline (omega=180) = [protein]-peptidylproline (omega=0)</text>
        <dbReference type="Rhea" id="RHEA:16237"/>
        <dbReference type="Rhea" id="RHEA-COMP:10747"/>
        <dbReference type="Rhea" id="RHEA-COMP:10748"/>
        <dbReference type="ChEBI" id="CHEBI:83833"/>
        <dbReference type="ChEBI" id="CHEBI:83834"/>
        <dbReference type="EC" id="5.2.1.8"/>
    </reaction>
</comment>
<comment type="subcellular location">
    <subcellularLocation>
        <location evidence="1">Nucleus</location>
    </subcellularLocation>
</comment>
<comment type="similarity">
    <text evidence="3">Belongs to the cyclophilin-type PPIase family. PPIase H subfamily.</text>
</comment>
<comment type="sequence caution" evidence="3">
    <conflict type="erroneous gene model prediction">
        <sequence resource="EMBL-CDS" id="EIE89933"/>
    </conflict>
</comment>
<reference key="1">
    <citation type="journal article" date="2009" name="PLoS Genet.">
        <title>Genomic analysis of the basal lineage fungus Rhizopus oryzae reveals a whole-genome duplication.</title>
        <authorList>
            <person name="Ma L.-J."/>
            <person name="Ibrahim A.S."/>
            <person name="Skory C."/>
            <person name="Grabherr M.G."/>
            <person name="Burger G."/>
            <person name="Butler M."/>
            <person name="Elias M."/>
            <person name="Idnurm A."/>
            <person name="Lang B.F."/>
            <person name="Sone T."/>
            <person name="Abe A."/>
            <person name="Calvo S.E."/>
            <person name="Corrochano L.M."/>
            <person name="Engels R."/>
            <person name="Fu J."/>
            <person name="Hansberg W."/>
            <person name="Kim J.-M."/>
            <person name="Kodira C.D."/>
            <person name="Koehrsen M.J."/>
            <person name="Liu B."/>
            <person name="Miranda-Saavedra D."/>
            <person name="O'Leary S."/>
            <person name="Ortiz-Castellanos L."/>
            <person name="Poulter R."/>
            <person name="Rodriguez-Romero J."/>
            <person name="Ruiz-Herrera J."/>
            <person name="Shen Y.-Q."/>
            <person name="Zeng Q."/>
            <person name="Galagan J."/>
            <person name="Birren B.W."/>
            <person name="Cuomo C.A."/>
            <person name="Wickes B.L."/>
        </authorList>
    </citation>
    <scope>NUCLEOTIDE SEQUENCE [LARGE SCALE GENOMIC DNA]</scope>
    <source>
        <strain>RA 99-880 / ATCC MYA-4621 / FGSC 9543 / NRRL 43880</strain>
    </source>
</reference>
<reference key="2">
    <citation type="journal article" date="2006" name="BMC Genomics">
        <title>Identification and comparative analysis of sixteen fungal peptidyl-prolyl cis/trans isomerase repertoires.</title>
        <authorList>
            <person name="Pemberton T.J."/>
        </authorList>
    </citation>
    <scope>REVISION OF GENE MODEL</scope>
</reference>
<name>PPIH_RHIO9</name>
<proteinExistence type="inferred from homology"/>
<keyword id="KW-0413">Isomerase</keyword>
<keyword id="KW-0539">Nucleus</keyword>
<keyword id="KW-1185">Reference proteome</keyword>
<keyword id="KW-0697">Rotamase</keyword>
<gene>
    <name type="primary">cyp7</name>
    <name type="ORF">RO3G_14644</name>
</gene>
<organism>
    <name type="scientific">Rhizopus delemar (strain RA 99-880 / ATCC MYA-4621 / FGSC 9543 / NRRL 43880)</name>
    <name type="common">Mucormycosis agent</name>
    <name type="synonym">Rhizopus arrhizus var. delemar</name>
    <dbReference type="NCBI Taxonomy" id="246409"/>
    <lineage>
        <taxon>Eukaryota</taxon>
        <taxon>Fungi</taxon>
        <taxon>Fungi incertae sedis</taxon>
        <taxon>Mucoromycota</taxon>
        <taxon>Mucoromycotina</taxon>
        <taxon>Mucoromycetes</taxon>
        <taxon>Mucorales</taxon>
        <taxon>Mucorineae</taxon>
        <taxon>Rhizopodaceae</taxon>
        <taxon>Rhizopus</taxon>
    </lineage>
</organism>
<accession>P0C1I3</accession>
<accession>I1CNA3</accession>
<feature type="chain" id="PRO_0000244716" description="Peptidyl-prolyl cis-trans isomerase H">
    <location>
        <begin position="1"/>
        <end position="178"/>
    </location>
</feature>
<feature type="domain" description="PPIase cyclophilin-type" evidence="2">
    <location>
        <begin position="14"/>
        <end position="177"/>
    </location>
</feature>
<protein>
    <recommendedName>
        <fullName>Peptidyl-prolyl cis-trans isomerase H</fullName>
        <shortName>PPIase H</shortName>
        <ecNumber>5.2.1.8</ecNumber>
    </recommendedName>
    <alternativeName>
        <fullName>Cyclophilin H</fullName>
    </alternativeName>
    <alternativeName>
        <fullName>Rotamase H</fullName>
    </alternativeName>
</protein>